<evidence type="ECO:0000255" key="1">
    <source>
        <dbReference type="HAMAP-Rule" id="MF_00052"/>
    </source>
</evidence>
<evidence type="ECO:0000255" key="2">
    <source>
        <dbReference type="PROSITE-ProRule" id="PRU01319"/>
    </source>
</evidence>
<reference key="1">
    <citation type="journal article" date="2006" name="Proc. Natl. Acad. Sci. U.S.A.">
        <title>Genome sequence of Synechococcus CC9311: insights into adaptation to a coastal environment.</title>
        <authorList>
            <person name="Palenik B."/>
            <person name="Ren Q."/>
            <person name="Dupont C.L."/>
            <person name="Myers G.S."/>
            <person name="Heidelberg J.F."/>
            <person name="Badger J.H."/>
            <person name="Madupu R."/>
            <person name="Nelson W.C."/>
            <person name="Brinkac L.M."/>
            <person name="Dodson R.J."/>
            <person name="Durkin A.S."/>
            <person name="Daugherty S.C."/>
            <person name="Sullivan S.A."/>
            <person name="Khouri H."/>
            <person name="Mohamoud Y."/>
            <person name="Halpin R."/>
            <person name="Paulsen I.T."/>
        </authorList>
    </citation>
    <scope>NUCLEOTIDE SEQUENCE [LARGE SCALE GENOMIC DNA]</scope>
    <source>
        <strain>CC9311</strain>
    </source>
</reference>
<protein>
    <recommendedName>
        <fullName evidence="1">Ribonuclease HII</fullName>
        <shortName evidence="1">RNase HII</shortName>
        <ecNumber evidence="1">3.1.26.4</ecNumber>
    </recommendedName>
</protein>
<gene>
    <name evidence="1" type="primary">rnhB</name>
    <name type="ordered locus">sync_0375</name>
</gene>
<name>RNH2_SYNS3</name>
<accession>Q0ID65</accession>
<feature type="chain" id="PRO_0000334963" description="Ribonuclease HII">
    <location>
        <begin position="1"/>
        <end position="197"/>
    </location>
</feature>
<feature type="domain" description="RNase H type-2" evidence="2">
    <location>
        <begin position="7"/>
        <end position="197"/>
    </location>
</feature>
<feature type="binding site" evidence="1">
    <location>
        <position position="13"/>
    </location>
    <ligand>
        <name>a divalent metal cation</name>
        <dbReference type="ChEBI" id="CHEBI:60240"/>
    </ligand>
</feature>
<feature type="binding site" evidence="1">
    <location>
        <position position="14"/>
    </location>
    <ligand>
        <name>a divalent metal cation</name>
        <dbReference type="ChEBI" id="CHEBI:60240"/>
    </ligand>
</feature>
<feature type="binding site" evidence="1">
    <location>
        <position position="109"/>
    </location>
    <ligand>
        <name>a divalent metal cation</name>
        <dbReference type="ChEBI" id="CHEBI:60240"/>
    </ligand>
</feature>
<proteinExistence type="inferred from homology"/>
<keyword id="KW-0963">Cytoplasm</keyword>
<keyword id="KW-0255">Endonuclease</keyword>
<keyword id="KW-0378">Hydrolase</keyword>
<keyword id="KW-0464">Manganese</keyword>
<keyword id="KW-0479">Metal-binding</keyword>
<keyword id="KW-0540">Nuclease</keyword>
<keyword id="KW-1185">Reference proteome</keyword>
<dbReference type="EC" id="3.1.26.4" evidence="1"/>
<dbReference type="EMBL" id="CP000435">
    <property type="protein sequence ID" value="ABI46246.1"/>
    <property type="molecule type" value="Genomic_DNA"/>
</dbReference>
<dbReference type="RefSeq" id="WP_011618347.1">
    <property type="nucleotide sequence ID" value="NC_008319.1"/>
</dbReference>
<dbReference type="SMR" id="Q0ID65"/>
<dbReference type="STRING" id="64471.sync_0375"/>
<dbReference type="KEGG" id="syg:sync_0375"/>
<dbReference type="eggNOG" id="COG0164">
    <property type="taxonomic scope" value="Bacteria"/>
</dbReference>
<dbReference type="HOGENOM" id="CLU_036532_3_1_3"/>
<dbReference type="OrthoDB" id="9803420at2"/>
<dbReference type="Proteomes" id="UP000001961">
    <property type="component" value="Chromosome"/>
</dbReference>
<dbReference type="GO" id="GO:0005737">
    <property type="term" value="C:cytoplasm"/>
    <property type="evidence" value="ECO:0007669"/>
    <property type="project" value="UniProtKB-SubCell"/>
</dbReference>
<dbReference type="GO" id="GO:0032299">
    <property type="term" value="C:ribonuclease H2 complex"/>
    <property type="evidence" value="ECO:0007669"/>
    <property type="project" value="TreeGrafter"/>
</dbReference>
<dbReference type="GO" id="GO:0030145">
    <property type="term" value="F:manganese ion binding"/>
    <property type="evidence" value="ECO:0007669"/>
    <property type="project" value="UniProtKB-UniRule"/>
</dbReference>
<dbReference type="GO" id="GO:0003723">
    <property type="term" value="F:RNA binding"/>
    <property type="evidence" value="ECO:0007669"/>
    <property type="project" value="InterPro"/>
</dbReference>
<dbReference type="GO" id="GO:0004523">
    <property type="term" value="F:RNA-DNA hybrid ribonuclease activity"/>
    <property type="evidence" value="ECO:0007669"/>
    <property type="project" value="UniProtKB-UniRule"/>
</dbReference>
<dbReference type="GO" id="GO:0043137">
    <property type="term" value="P:DNA replication, removal of RNA primer"/>
    <property type="evidence" value="ECO:0007669"/>
    <property type="project" value="TreeGrafter"/>
</dbReference>
<dbReference type="GO" id="GO:0006298">
    <property type="term" value="P:mismatch repair"/>
    <property type="evidence" value="ECO:0007669"/>
    <property type="project" value="TreeGrafter"/>
</dbReference>
<dbReference type="CDD" id="cd07182">
    <property type="entry name" value="RNase_HII_bacteria_HII_like"/>
    <property type="match status" value="1"/>
</dbReference>
<dbReference type="Gene3D" id="3.30.420.10">
    <property type="entry name" value="Ribonuclease H-like superfamily/Ribonuclease H"/>
    <property type="match status" value="1"/>
</dbReference>
<dbReference type="HAMAP" id="MF_00052_B">
    <property type="entry name" value="RNase_HII_B"/>
    <property type="match status" value="1"/>
</dbReference>
<dbReference type="InterPro" id="IPR022898">
    <property type="entry name" value="RNase_HII"/>
</dbReference>
<dbReference type="InterPro" id="IPR001352">
    <property type="entry name" value="RNase_HII/HIII"/>
</dbReference>
<dbReference type="InterPro" id="IPR024567">
    <property type="entry name" value="RNase_HII/HIII_dom"/>
</dbReference>
<dbReference type="InterPro" id="IPR012337">
    <property type="entry name" value="RNaseH-like_sf"/>
</dbReference>
<dbReference type="InterPro" id="IPR036397">
    <property type="entry name" value="RNaseH_sf"/>
</dbReference>
<dbReference type="NCBIfam" id="NF000595">
    <property type="entry name" value="PRK00015.1-3"/>
    <property type="match status" value="1"/>
</dbReference>
<dbReference type="NCBIfam" id="NF010537">
    <property type="entry name" value="PRK13925.1"/>
    <property type="match status" value="1"/>
</dbReference>
<dbReference type="PANTHER" id="PTHR10954">
    <property type="entry name" value="RIBONUCLEASE H2 SUBUNIT A"/>
    <property type="match status" value="1"/>
</dbReference>
<dbReference type="PANTHER" id="PTHR10954:SF18">
    <property type="entry name" value="RIBONUCLEASE HII"/>
    <property type="match status" value="1"/>
</dbReference>
<dbReference type="Pfam" id="PF01351">
    <property type="entry name" value="RNase_HII"/>
    <property type="match status" value="1"/>
</dbReference>
<dbReference type="SUPFAM" id="SSF53098">
    <property type="entry name" value="Ribonuclease H-like"/>
    <property type="match status" value="1"/>
</dbReference>
<dbReference type="PROSITE" id="PS51975">
    <property type="entry name" value="RNASE_H_2"/>
    <property type="match status" value="1"/>
</dbReference>
<comment type="function">
    <text evidence="1">Endonuclease that specifically degrades the RNA of RNA-DNA hybrids.</text>
</comment>
<comment type="catalytic activity">
    <reaction evidence="1">
        <text>Endonucleolytic cleavage to 5'-phosphomonoester.</text>
        <dbReference type="EC" id="3.1.26.4"/>
    </reaction>
</comment>
<comment type="cofactor">
    <cofactor evidence="1">
        <name>Mn(2+)</name>
        <dbReference type="ChEBI" id="CHEBI:29035"/>
    </cofactor>
    <cofactor evidence="1">
        <name>Mg(2+)</name>
        <dbReference type="ChEBI" id="CHEBI:18420"/>
    </cofactor>
    <text evidence="1">Manganese or magnesium. Binds 1 divalent metal ion per monomer in the absence of substrate. May bind a second metal ion after substrate binding.</text>
</comment>
<comment type="subcellular location">
    <subcellularLocation>
        <location evidence="1">Cytoplasm</location>
    </subcellularLocation>
</comment>
<comment type="similarity">
    <text evidence="1">Belongs to the RNase HII family.</text>
</comment>
<organism>
    <name type="scientific">Synechococcus sp. (strain CC9311)</name>
    <dbReference type="NCBI Taxonomy" id="64471"/>
    <lineage>
        <taxon>Bacteria</taxon>
        <taxon>Bacillati</taxon>
        <taxon>Cyanobacteriota</taxon>
        <taxon>Cyanophyceae</taxon>
        <taxon>Synechococcales</taxon>
        <taxon>Synechococcaceae</taxon>
        <taxon>Synechococcus</taxon>
    </lineage>
</organism>
<sequence>MIASDGLGIAGVDEVGRGCLFGPVFAAAVVLSDHAAEHLQAAGLTDSKALTPSRRAALVPLIEAHAHAWGLGQSSARAVDRDGIRSATEQAMLCALQRLPCRPQLVLVDGVLPLRLWEGSQRTIVRGDSSHAAIAAASVLAKEARDALIRRLSNRFPGYGLERHAGYGTAQHRAALLACGPTPLHRHSFLRKLFATV</sequence>